<proteinExistence type="inferred from homology"/>
<organism>
    <name type="scientific">Actinobacillus pleuropneumoniae serotype 5b (strain L20)</name>
    <dbReference type="NCBI Taxonomy" id="416269"/>
    <lineage>
        <taxon>Bacteria</taxon>
        <taxon>Pseudomonadati</taxon>
        <taxon>Pseudomonadota</taxon>
        <taxon>Gammaproteobacteria</taxon>
        <taxon>Pasteurellales</taxon>
        <taxon>Pasteurellaceae</taxon>
        <taxon>Actinobacillus</taxon>
    </lineage>
</organism>
<gene>
    <name evidence="1" type="primary">queC</name>
    <name type="ordered locus">APL_1097</name>
</gene>
<sequence length="222" mass="24794">MNSTPKAVVIFSGGQDSTTCLFQAIQEFGVENVEVVTFQYGQRHAIELEKAAWIAKDLGVKQTLIDTSVIKAITSNAMMEEHEIKQEGNTPNTFVDGRNALFLLYTAIYAKGQGIRTIFTGVCETDFSGYPDCRDVFVKSMNVTLNLAMDYNFNIRTPLMYLTKKQTWALADKLGAFDYIRQHTHTCYLGVEGGCHTCPSCVLREKGLNEYLSEKTSGQKNV</sequence>
<evidence type="ECO:0000255" key="1">
    <source>
        <dbReference type="HAMAP-Rule" id="MF_01633"/>
    </source>
</evidence>
<accession>A3N1A3</accession>
<protein>
    <recommendedName>
        <fullName evidence="1">7-cyano-7-deazaguanine synthase</fullName>
        <ecNumber evidence="1">6.3.4.20</ecNumber>
    </recommendedName>
    <alternativeName>
        <fullName evidence="1">7-cyano-7-carbaguanine synthase</fullName>
    </alternativeName>
    <alternativeName>
        <fullName evidence="1">PreQ(0) synthase</fullName>
    </alternativeName>
    <alternativeName>
        <fullName evidence="1">Queuosine biosynthesis protein QueC</fullName>
    </alternativeName>
</protein>
<feature type="chain" id="PRO_0000336885" description="7-cyano-7-deazaguanine synthase">
    <location>
        <begin position="1"/>
        <end position="222"/>
    </location>
</feature>
<feature type="binding site" evidence="1">
    <location>
        <begin position="11"/>
        <end position="21"/>
    </location>
    <ligand>
        <name>ATP</name>
        <dbReference type="ChEBI" id="CHEBI:30616"/>
    </ligand>
</feature>
<feature type="binding site" evidence="1">
    <location>
        <position position="187"/>
    </location>
    <ligand>
        <name>Zn(2+)</name>
        <dbReference type="ChEBI" id="CHEBI:29105"/>
    </ligand>
</feature>
<feature type="binding site" evidence="1">
    <location>
        <position position="195"/>
    </location>
    <ligand>
        <name>Zn(2+)</name>
        <dbReference type="ChEBI" id="CHEBI:29105"/>
    </ligand>
</feature>
<feature type="binding site" evidence="1">
    <location>
        <position position="198"/>
    </location>
    <ligand>
        <name>Zn(2+)</name>
        <dbReference type="ChEBI" id="CHEBI:29105"/>
    </ligand>
</feature>
<feature type="binding site" evidence="1">
    <location>
        <position position="201"/>
    </location>
    <ligand>
        <name>Zn(2+)</name>
        <dbReference type="ChEBI" id="CHEBI:29105"/>
    </ligand>
</feature>
<dbReference type="EC" id="6.3.4.20" evidence="1"/>
<dbReference type="EMBL" id="CP000569">
    <property type="protein sequence ID" value="ABN74189.1"/>
    <property type="molecule type" value="Genomic_DNA"/>
</dbReference>
<dbReference type="RefSeq" id="WP_011848532.1">
    <property type="nucleotide sequence ID" value="NC_009053.1"/>
</dbReference>
<dbReference type="SMR" id="A3N1A3"/>
<dbReference type="STRING" id="416269.APL_1097"/>
<dbReference type="EnsemblBacteria" id="ABN74189">
    <property type="protein sequence ID" value="ABN74189"/>
    <property type="gene ID" value="APL_1097"/>
</dbReference>
<dbReference type="KEGG" id="apl:APL_1097"/>
<dbReference type="PATRIC" id="fig|416269.6.peg.1145"/>
<dbReference type="eggNOG" id="COG0603">
    <property type="taxonomic scope" value="Bacteria"/>
</dbReference>
<dbReference type="HOGENOM" id="CLU_081854_0_0_6"/>
<dbReference type="UniPathway" id="UPA00391"/>
<dbReference type="Proteomes" id="UP000001432">
    <property type="component" value="Chromosome"/>
</dbReference>
<dbReference type="GO" id="GO:0005524">
    <property type="term" value="F:ATP binding"/>
    <property type="evidence" value="ECO:0007669"/>
    <property type="project" value="UniProtKB-UniRule"/>
</dbReference>
<dbReference type="GO" id="GO:0016879">
    <property type="term" value="F:ligase activity, forming carbon-nitrogen bonds"/>
    <property type="evidence" value="ECO:0007669"/>
    <property type="project" value="UniProtKB-UniRule"/>
</dbReference>
<dbReference type="GO" id="GO:0008270">
    <property type="term" value="F:zinc ion binding"/>
    <property type="evidence" value="ECO:0007669"/>
    <property type="project" value="UniProtKB-UniRule"/>
</dbReference>
<dbReference type="GO" id="GO:0008616">
    <property type="term" value="P:queuosine biosynthetic process"/>
    <property type="evidence" value="ECO:0007669"/>
    <property type="project" value="UniProtKB-UniRule"/>
</dbReference>
<dbReference type="CDD" id="cd01995">
    <property type="entry name" value="QueC-like"/>
    <property type="match status" value="1"/>
</dbReference>
<dbReference type="Gene3D" id="3.40.50.620">
    <property type="entry name" value="HUPs"/>
    <property type="match status" value="1"/>
</dbReference>
<dbReference type="HAMAP" id="MF_01633">
    <property type="entry name" value="QueC"/>
    <property type="match status" value="1"/>
</dbReference>
<dbReference type="InterPro" id="IPR018317">
    <property type="entry name" value="QueC"/>
</dbReference>
<dbReference type="InterPro" id="IPR014729">
    <property type="entry name" value="Rossmann-like_a/b/a_fold"/>
</dbReference>
<dbReference type="NCBIfam" id="TIGR00364">
    <property type="entry name" value="7-cyano-7-deazaguanine synthase QueC"/>
    <property type="match status" value="1"/>
</dbReference>
<dbReference type="PANTHER" id="PTHR42914">
    <property type="entry name" value="7-CYANO-7-DEAZAGUANINE SYNTHASE"/>
    <property type="match status" value="1"/>
</dbReference>
<dbReference type="PANTHER" id="PTHR42914:SF1">
    <property type="entry name" value="7-CYANO-7-DEAZAGUANINE SYNTHASE"/>
    <property type="match status" value="1"/>
</dbReference>
<dbReference type="Pfam" id="PF06508">
    <property type="entry name" value="QueC"/>
    <property type="match status" value="1"/>
</dbReference>
<dbReference type="PIRSF" id="PIRSF006293">
    <property type="entry name" value="ExsB"/>
    <property type="match status" value="1"/>
</dbReference>
<dbReference type="SUPFAM" id="SSF52402">
    <property type="entry name" value="Adenine nucleotide alpha hydrolases-like"/>
    <property type="match status" value="1"/>
</dbReference>
<keyword id="KW-0067">ATP-binding</keyword>
<keyword id="KW-0436">Ligase</keyword>
<keyword id="KW-0479">Metal-binding</keyword>
<keyword id="KW-0547">Nucleotide-binding</keyword>
<keyword id="KW-0671">Queuosine biosynthesis</keyword>
<keyword id="KW-1185">Reference proteome</keyword>
<keyword id="KW-0862">Zinc</keyword>
<comment type="function">
    <text evidence="1">Catalyzes the ATP-dependent conversion of 7-carboxy-7-deazaguanine (CDG) to 7-cyano-7-deazaguanine (preQ(0)).</text>
</comment>
<comment type="catalytic activity">
    <reaction evidence="1">
        <text>7-carboxy-7-deazaguanine + NH4(+) + ATP = 7-cyano-7-deazaguanine + ADP + phosphate + H2O + H(+)</text>
        <dbReference type="Rhea" id="RHEA:27982"/>
        <dbReference type="ChEBI" id="CHEBI:15377"/>
        <dbReference type="ChEBI" id="CHEBI:15378"/>
        <dbReference type="ChEBI" id="CHEBI:28938"/>
        <dbReference type="ChEBI" id="CHEBI:30616"/>
        <dbReference type="ChEBI" id="CHEBI:43474"/>
        <dbReference type="ChEBI" id="CHEBI:45075"/>
        <dbReference type="ChEBI" id="CHEBI:61036"/>
        <dbReference type="ChEBI" id="CHEBI:456216"/>
        <dbReference type="EC" id="6.3.4.20"/>
    </reaction>
</comment>
<comment type="cofactor">
    <cofactor evidence="1">
        <name>Zn(2+)</name>
        <dbReference type="ChEBI" id="CHEBI:29105"/>
    </cofactor>
    <text evidence="1">Binds 1 zinc ion per subunit.</text>
</comment>
<comment type="pathway">
    <text evidence="1">Purine metabolism; 7-cyano-7-deazaguanine biosynthesis.</text>
</comment>
<comment type="similarity">
    <text evidence="1">Belongs to the QueC family.</text>
</comment>
<reference key="1">
    <citation type="journal article" date="2008" name="J. Bacteriol.">
        <title>The complete genome sequence of Actinobacillus pleuropneumoniae L20 (serotype 5b).</title>
        <authorList>
            <person name="Foote S.J."/>
            <person name="Bosse J.T."/>
            <person name="Bouevitch A.B."/>
            <person name="Langford P.R."/>
            <person name="Young N.M."/>
            <person name="Nash J.H.E."/>
        </authorList>
    </citation>
    <scope>NUCLEOTIDE SEQUENCE [LARGE SCALE GENOMIC DNA]</scope>
    <source>
        <strain>L20</strain>
    </source>
</reference>
<name>QUEC_ACTP2</name>